<protein>
    <recommendedName>
        <fullName evidence="1">Pyridoxal 5'-phosphate synthase subunit PdxS</fullName>
        <shortName evidence="1">PLP synthase subunit PdxS</shortName>
        <ecNumber evidence="1">4.3.3.6</ecNumber>
    </recommendedName>
    <alternativeName>
        <fullName evidence="1">Pdx1</fullName>
    </alternativeName>
</protein>
<name>PDXS_DESHY</name>
<sequence>MDRKRYELNKELAQMLKGGVIMDVTTPEQAKIAEAAGACAVMALERIPADIRAVGGVSRMSDPKMIKGIMEAVSIPVMAKCRIGHFVEAQILEAVEIDYIDESEVLSPADDVYHIDKTRFKVPFVCGAKDLGEALRRINEGAAMIRTKGEPGTGDIVQAVRHMRMINRQISRLAGMREDELFQEAKELQVPYDLVLYVHEHKRLPVVNFAAGGVATPGDAALMMQLGAEGVFVGSGIFKSGDPEKRAQAIVKAVTNYQDPKVLAELSEDLGEAMVGINEQEIELLMAERGK</sequence>
<evidence type="ECO:0000255" key="1">
    <source>
        <dbReference type="HAMAP-Rule" id="MF_01824"/>
    </source>
</evidence>
<comment type="function">
    <text evidence="1">Catalyzes the formation of pyridoxal 5'-phosphate from ribose 5-phosphate (RBP), glyceraldehyde 3-phosphate (G3P) and ammonia. The ammonia is provided by the PdxT subunit. Can also use ribulose 5-phosphate and dihydroxyacetone phosphate as substrates, resulting from enzyme-catalyzed isomerization of RBP and G3P, respectively.</text>
</comment>
<comment type="catalytic activity">
    <reaction evidence="1">
        <text>aldehydo-D-ribose 5-phosphate + D-glyceraldehyde 3-phosphate + L-glutamine = pyridoxal 5'-phosphate + L-glutamate + phosphate + 3 H2O + H(+)</text>
        <dbReference type="Rhea" id="RHEA:31507"/>
        <dbReference type="ChEBI" id="CHEBI:15377"/>
        <dbReference type="ChEBI" id="CHEBI:15378"/>
        <dbReference type="ChEBI" id="CHEBI:29985"/>
        <dbReference type="ChEBI" id="CHEBI:43474"/>
        <dbReference type="ChEBI" id="CHEBI:58273"/>
        <dbReference type="ChEBI" id="CHEBI:58359"/>
        <dbReference type="ChEBI" id="CHEBI:59776"/>
        <dbReference type="ChEBI" id="CHEBI:597326"/>
        <dbReference type="EC" id="4.3.3.6"/>
    </reaction>
</comment>
<comment type="pathway">
    <text evidence="1">Cofactor biosynthesis; pyridoxal 5'-phosphate biosynthesis.</text>
</comment>
<comment type="subunit">
    <text evidence="1">In the presence of PdxT, forms a dodecamer of heterodimers.</text>
</comment>
<comment type="similarity">
    <text evidence="1">Belongs to the PdxS/SNZ family.</text>
</comment>
<gene>
    <name evidence="1" type="primary">pdxS</name>
    <name type="ordered locus">DSY4246</name>
</gene>
<dbReference type="EC" id="4.3.3.6" evidence="1"/>
<dbReference type="EMBL" id="AP008230">
    <property type="protein sequence ID" value="BAE86035.1"/>
    <property type="molecule type" value="Genomic_DNA"/>
</dbReference>
<dbReference type="RefSeq" id="WP_005813582.1">
    <property type="nucleotide sequence ID" value="NC_007907.1"/>
</dbReference>
<dbReference type="SMR" id="Q24PK7"/>
<dbReference type="STRING" id="138119.DSY4246"/>
<dbReference type="KEGG" id="dsy:DSY4246"/>
<dbReference type="eggNOG" id="COG0214">
    <property type="taxonomic scope" value="Bacteria"/>
</dbReference>
<dbReference type="HOGENOM" id="CLU_055352_1_0_9"/>
<dbReference type="UniPathway" id="UPA00245"/>
<dbReference type="Proteomes" id="UP000001946">
    <property type="component" value="Chromosome"/>
</dbReference>
<dbReference type="GO" id="GO:0036381">
    <property type="term" value="F:pyridoxal 5'-phosphate synthase (glutamine hydrolysing) activity"/>
    <property type="evidence" value="ECO:0007669"/>
    <property type="project" value="UniProtKB-UniRule"/>
</dbReference>
<dbReference type="GO" id="GO:0006520">
    <property type="term" value="P:amino acid metabolic process"/>
    <property type="evidence" value="ECO:0007669"/>
    <property type="project" value="TreeGrafter"/>
</dbReference>
<dbReference type="GO" id="GO:0042823">
    <property type="term" value="P:pyridoxal phosphate biosynthetic process"/>
    <property type="evidence" value="ECO:0007669"/>
    <property type="project" value="UniProtKB-UniRule"/>
</dbReference>
<dbReference type="GO" id="GO:0008615">
    <property type="term" value="P:pyridoxine biosynthetic process"/>
    <property type="evidence" value="ECO:0007669"/>
    <property type="project" value="TreeGrafter"/>
</dbReference>
<dbReference type="CDD" id="cd04727">
    <property type="entry name" value="pdxS"/>
    <property type="match status" value="1"/>
</dbReference>
<dbReference type="FunFam" id="3.20.20.70:FF:000001">
    <property type="entry name" value="Pyridoxine biosynthesis protein PDX1"/>
    <property type="match status" value="1"/>
</dbReference>
<dbReference type="Gene3D" id="3.20.20.70">
    <property type="entry name" value="Aldolase class I"/>
    <property type="match status" value="1"/>
</dbReference>
<dbReference type="HAMAP" id="MF_01824">
    <property type="entry name" value="PdxS"/>
    <property type="match status" value="1"/>
</dbReference>
<dbReference type="InterPro" id="IPR013785">
    <property type="entry name" value="Aldolase_TIM"/>
</dbReference>
<dbReference type="InterPro" id="IPR001852">
    <property type="entry name" value="PdxS/SNZ"/>
</dbReference>
<dbReference type="InterPro" id="IPR033755">
    <property type="entry name" value="PdxS/SNZ_N"/>
</dbReference>
<dbReference type="InterPro" id="IPR011060">
    <property type="entry name" value="RibuloseP-bd_barrel"/>
</dbReference>
<dbReference type="NCBIfam" id="NF003215">
    <property type="entry name" value="PRK04180.1"/>
    <property type="match status" value="1"/>
</dbReference>
<dbReference type="NCBIfam" id="TIGR00343">
    <property type="entry name" value="pyridoxal 5'-phosphate synthase lyase subunit PdxS"/>
    <property type="match status" value="1"/>
</dbReference>
<dbReference type="PANTHER" id="PTHR31829">
    <property type="entry name" value="PYRIDOXAL 5'-PHOSPHATE SYNTHASE SUBUNIT SNZ1-RELATED"/>
    <property type="match status" value="1"/>
</dbReference>
<dbReference type="PANTHER" id="PTHR31829:SF0">
    <property type="entry name" value="PYRIDOXAL 5'-PHOSPHATE SYNTHASE SUBUNIT SNZ1-RELATED"/>
    <property type="match status" value="1"/>
</dbReference>
<dbReference type="Pfam" id="PF01680">
    <property type="entry name" value="SOR_SNZ"/>
    <property type="match status" value="1"/>
</dbReference>
<dbReference type="PIRSF" id="PIRSF029271">
    <property type="entry name" value="Pdx1"/>
    <property type="match status" value="1"/>
</dbReference>
<dbReference type="SUPFAM" id="SSF51366">
    <property type="entry name" value="Ribulose-phoshate binding barrel"/>
    <property type="match status" value="1"/>
</dbReference>
<dbReference type="PROSITE" id="PS51129">
    <property type="entry name" value="PDXS_SNZ_2"/>
    <property type="match status" value="1"/>
</dbReference>
<accession>Q24PK7</accession>
<proteinExistence type="inferred from homology"/>
<keyword id="KW-0456">Lyase</keyword>
<keyword id="KW-0663">Pyridoxal phosphate</keyword>
<keyword id="KW-1185">Reference proteome</keyword>
<keyword id="KW-0704">Schiff base</keyword>
<organism>
    <name type="scientific">Desulfitobacterium hafniense (strain Y51)</name>
    <dbReference type="NCBI Taxonomy" id="138119"/>
    <lineage>
        <taxon>Bacteria</taxon>
        <taxon>Bacillati</taxon>
        <taxon>Bacillota</taxon>
        <taxon>Clostridia</taxon>
        <taxon>Eubacteriales</taxon>
        <taxon>Desulfitobacteriaceae</taxon>
        <taxon>Desulfitobacterium</taxon>
    </lineage>
</organism>
<feature type="chain" id="PRO_1000070369" description="Pyridoxal 5'-phosphate synthase subunit PdxS">
    <location>
        <begin position="1"/>
        <end position="291"/>
    </location>
</feature>
<feature type="active site" description="Schiff-base intermediate with D-ribose 5-phosphate" evidence="1">
    <location>
        <position position="80"/>
    </location>
</feature>
<feature type="binding site" evidence="1">
    <location>
        <position position="23"/>
    </location>
    <ligand>
        <name>D-ribose 5-phosphate</name>
        <dbReference type="ChEBI" id="CHEBI:78346"/>
    </ligand>
</feature>
<feature type="binding site" evidence="1">
    <location>
        <position position="152"/>
    </location>
    <ligand>
        <name>D-ribose 5-phosphate</name>
        <dbReference type="ChEBI" id="CHEBI:78346"/>
    </ligand>
</feature>
<feature type="binding site" evidence="1">
    <location>
        <position position="164"/>
    </location>
    <ligand>
        <name>D-glyceraldehyde 3-phosphate</name>
        <dbReference type="ChEBI" id="CHEBI:59776"/>
    </ligand>
</feature>
<feature type="binding site" evidence="1">
    <location>
        <position position="213"/>
    </location>
    <ligand>
        <name>D-ribose 5-phosphate</name>
        <dbReference type="ChEBI" id="CHEBI:78346"/>
    </ligand>
</feature>
<feature type="binding site" evidence="1">
    <location>
        <begin position="234"/>
        <end position="235"/>
    </location>
    <ligand>
        <name>D-ribose 5-phosphate</name>
        <dbReference type="ChEBI" id="CHEBI:78346"/>
    </ligand>
</feature>
<reference key="1">
    <citation type="journal article" date="2006" name="J. Bacteriol.">
        <title>Complete genome sequence of the dehalorespiring bacterium Desulfitobacterium hafniense Y51 and comparison with Dehalococcoides ethenogenes 195.</title>
        <authorList>
            <person name="Nonaka H."/>
            <person name="Keresztes G."/>
            <person name="Shinoda Y."/>
            <person name="Ikenaga Y."/>
            <person name="Abe M."/>
            <person name="Naito K."/>
            <person name="Inatomi K."/>
            <person name="Furukawa K."/>
            <person name="Inui M."/>
            <person name="Yukawa H."/>
        </authorList>
    </citation>
    <scope>NUCLEOTIDE SEQUENCE [LARGE SCALE GENOMIC DNA]</scope>
    <source>
        <strain>Y51</strain>
    </source>
</reference>